<dbReference type="EMBL" id="Z73202">
    <property type="protein sequence ID" value="CAA97554.1"/>
    <property type="molecule type" value="Genomic_DNA"/>
</dbReference>
<dbReference type="EMBL" id="BK006945">
    <property type="protein sequence ID" value="DAA09348.1"/>
    <property type="molecule type" value="Genomic_DNA"/>
</dbReference>
<dbReference type="PIR" id="S64857">
    <property type="entry name" value="S64857"/>
</dbReference>
<dbReference type="RefSeq" id="NP_013130.1">
    <property type="nucleotide sequence ID" value="NM_001181917.1"/>
</dbReference>
<dbReference type="BioGRID" id="31304">
    <property type="interactions" value="20"/>
</dbReference>
<dbReference type="DIP" id="DIP-4832N"/>
<dbReference type="FunCoup" id="Q07967">
    <property type="interactions" value="46"/>
</dbReference>
<dbReference type="STRING" id="4932.YLR030W"/>
<dbReference type="iPTMnet" id="Q07967"/>
<dbReference type="PaxDb" id="4932-YLR030W"/>
<dbReference type="PeptideAtlas" id="Q07967"/>
<dbReference type="EnsemblFungi" id="YLR030W_mRNA">
    <property type="protein sequence ID" value="YLR030W"/>
    <property type="gene ID" value="YLR030W"/>
</dbReference>
<dbReference type="GeneID" id="850717"/>
<dbReference type="KEGG" id="sce:YLR030W"/>
<dbReference type="AGR" id="SGD:S000004020"/>
<dbReference type="SGD" id="S000004020">
    <property type="gene designation" value="YLR030W"/>
</dbReference>
<dbReference type="VEuPathDB" id="FungiDB:YLR030W"/>
<dbReference type="HOGENOM" id="CLU_1058471_0_0_1"/>
<dbReference type="InParanoid" id="Q07967"/>
<dbReference type="OMA" id="MITKPAP"/>
<dbReference type="OrthoDB" id="4046637at2759"/>
<dbReference type="BioCyc" id="YEAST:G3O-32189-MONOMER"/>
<dbReference type="BioGRID-ORCS" id="850717">
    <property type="hits" value="6 hits in 10 CRISPR screens"/>
</dbReference>
<dbReference type="PRO" id="PR:Q07967"/>
<dbReference type="Proteomes" id="UP000002311">
    <property type="component" value="Chromosome XII"/>
</dbReference>
<dbReference type="RNAct" id="Q07967">
    <property type="molecule type" value="protein"/>
</dbReference>
<proteinExistence type="predicted"/>
<keyword id="KW-1185">Reference proteome</keyword>
<sequence length="263" mass="29985">MEGEQIMEYVQETPIIPKRIIHYSIPKQMITKPAPHVEMTLVANTFRDMDLPQHPVIHDCWQNKEYSTQRYSGNVAQQRLSFEEHPNEECQNSVGLIKRVSTFFKKRPLSRKNSIKSIGDVKSEARNRGEGLLGEVDNLNEQNVRENLTSEHEKSPEGDSKRYGLFSFEETPPIQVLEQGNINSELSSFKNTSLAENKRSSDSFVSLKPGEDEHSPLEISTCGNLTEREDLQSGEERFDSAAQNIKVASMKEKKKIFKGNKTD</sequence>
<reference key="1">
    <citation type="journal article" date="1997" name="Nature">
        <title>The nucleotide sequence of Saccharomyces cerevisiae chromosome XII.</title>
        <authorList>
            <person name="Johnston M."/>
            <person name="Hillier L.W."/>
            <person name="Riles L."/>
            <person name="Albermann K."/>
            <person name="Andre B."/>
            <person name="Ansorge W."/>
            <person name="Benes V."/>
            <person name="Brueckner M."/>
            <person name="Delius H."/>
            <person name="Dubois E."/>
            <person name="Duesterhoeft A."/>
            <person name="Entian K.-D."/>
            <person name="Floeth M."/>
            <person name="Goffeau A."/>
            <person name="Hebling U."/>
            <person name="Heumann K."/>
            <person name="Heuss-Neitzel D."/>
            <person name="Hilbert H."/>
            <person name="Hilger F."/>
            <person name="Kleine K."/>
            <person name="Koetter P."/>
            <person name="Louis E.J."/>
            <person name="Messenguy F."/>
            <person name="Mewes H.-W."/>
            <person name="Miosga T."/>
            <person name="Moestl D."/>
            <person name="Mueller-Auer S."/>
            <person name="Nentwich U."/>
            <person name="Obermaier B."/>
            <person name="Piravandi E."/>
            <person name="Pohl T.M."/>
            <person name="Portetelle D."/>
            <person name="Purnelle B."/>
            <person name="Rechmann S."/>
            <person name="Rieger M."/>
            <person name="Rinke M."/>
            <person name="Rose M."/>
            <person name="Scharfe M."/>
            <person name="Scherens B."/>
            <person name="Scholler P."/>
            <person name="Schwager C."/>
            <person name="Schwarz S."/>
            <person name="Underwood A.P."/>
            <person name="Urrestarazu L.A."/>
            <person name="Vandenbol M."/>
            <person name="Verhasselt P."/>
            <person name="Vierendeels F."/>
            <person name="Voet M."/>
            <person name="Volckaert G."/>
            <person name="Voss H."/>
            <person name="Wambutt R."/>
            <person name="Wedler E."/>
            <person name="Wedler H."/>
            <person name="Zimmermann F.K."/>
            <person name="Zollner A."/>
            <person name="Hani J."/>
            <person name="Hoheisel J.D."/>
        </authorList>
    </citation>
    <scope>NUCLEOTIDE SEQUENCE [LARGE SCALE GENOMIC DNA]</scope>
    <source>
        <strain>ATCC 204508 / S288c</strain>
    </source>
</reference>
<reference key="2">
    <citation type="journal article" date="2014" name="G3 (Bethesda)">
        <title>The reference genome sequence of Saccharomyces cerevisiae: Then and now.</title>
        <authorList>
            <person name="Engel S.R."/>
            <person name="Dietrich F.S."/>
            <person name="Fisk D.G."/>
            <person name="Binkley G."/>
            <person name="Balakrishnan R."/>
            <person name="Costanzo M.C."/>
            <person name="Dwight S.S."/>
            <person name="Hitz B.C."/>
            <person name="Karra K."/>
            <person name="Nash R.S."/>
            <person name="Weng S."/>
            <person name="Wong E.D."/>
            <person name="Lloyd P."/>
            <person name="Skrzypek M.S."/>
            <person name="Miyasato S.R."/>
            <person name="Simison M."/>
            <person name="Cherry J.M."/>
        </authorList>
    </citation>
    <scope>GENOME REANNOTATION</scope>
    <source>
        <strain>ATCC 204508 / S288c</strain>
    </source>
</reference>
<accession>Q07967</accession>
<accession>D6VY32</accession>
<name>YL030_YEAST</name>
<evidence type="ECO:0000256" key="1">
    <source>
        <dbReference type="SAM" id="MobiDB-lite"/>
    </source>
</evidence>
<feature type="chain" id="PRO_0000247203" description="Putative uncharacterized protein YLR030W">
    <location>
        <begin position="1"/>
        <end position="263"/>
    </location>
</feature>
<feature type="region of interest" description="Disordered" evidence="1">
    <location>
        <begin position="198"/>
        <end position="224"/>
    </location>
</feature>
<protein>
    <recommendedName>
        <fullName>Putative uncharacterized protein YLR030W</fullName>
    </recommendedName>
</protein>
<gene>
    <name type="ordered locus">YLR030W</name>
</gene>
<organism>
    <name type="scientific">Saccharomyces cerevisiae (strain ATCC 204508 / S288c)</name>
    <name type="common">Baker's yeast</name>
    <dbReference type="NCBI Taxonomy" id="559292"/>
    <lineage>
        <taxon>Eukaryota</taxon>
        <taxon>Fungi</taxon>
        <taxon>Dikarya</taxon>
        <taxon>Ascomycota</taxon>
        <taxon>Saccharomycotina</taxon>
        <taxon>Saccharomycetes</taxon>
        <taxon>Saccharomycetales</taxon>
        <taxon>Saccharomycetaceae</taxon>
        <taxon>Saccharomyces</taxon>
    </lineage>
</organism>